<evidence type="ECO:0000250" key="1"/>
<evidence type="ECO:0000255" key="2">
    <source>
        <dbReference type="HAMAP-Rule" id="MF_00403"/>
    </source>
</evidence>
<evidence type="ECO:0000305" key="3"/>
<protein>
    <recommendedName>
        <fullName evidence="2">Small ribosomal subunit protein uS12</fullName>
    </recommendedName>
    <alternativeName>
        <fullName evidence="3">30S ribosomal protein S12</fullName>
    </alternativeName>
</protein>
<accession>A4SUV6</accession>
<organism>
    <name type="scientific">Polynucleobacter asymbioticus (strain DSM 18221 / CIP 109841 / QLW-P1DMWA-1)</name>
    <name type="common">Polynucleobacter necessarius subsp. asymbioticus</name>
    <dbReference type="NCBI Taxonomy" id="312153"/>
    <lineage>
        <taxon>Bacteria</taxon>
        <taxon>Pseudomonadati</taxon>
        <taxon>Pseudomonadota</taxon>
        <taxon>Betaproteobacteria</taxon>
        <taxon>Burkholderiales</taxon>
        <taxon>Burkholderiaceae</taxon>
        <taxon>Polynucleobacter</taxon>
    </lineage>
</organism>
<proteinExistence type="inferred from homology"/>
<keyword id="KW-0488">Methylation</keyword>
<keyword id="KW-1185">Reference proteome</keyword>
<keyword id="KW-0687">Ribonucleoprotein</keyword>
<keyword id="KW-0689">Ribosomal protein</keyword>
<keyword id="KW-0694">RNA-binding</keyword>
<keyword id="KW-0699">rRNA-binding</keyword>
<keyword id="KW-0820">tRNA-binding</keyword>
<name>RS12_POLAQ</name>
<gene>
    <name evidence="2" type="primary">rpsL</name>
    <name type="ordered locus">Pnuc_0048</name>
</gene>
<reference key="1">
    <citation type="journal article" date="2012" name="Stand. Genomic Sci.">
        <title>Complete genome sequence of Polynucleobacter necessarius subsp. asymbioticus type strain (QLW-P1DMWA-1(T)).</title>
        <authorList>
            <person name="Meincke L."/>
            <person name="Copeland A."/>
            <person name="Lapidus A."/>
            <person name="Lucas S."/>
            <person name="Berry K.W."/>
            <person name="Del Rio T.G."/>
            <person name="Hammon N."/>
            <person name="Dalin E."/>
            <person name="Tice H."/>
            <person name="Pitluck S."/>
            <person name="Richardson P."/>
            <person name="Bruce D."/>
            <person name="Goodwin L."/>
            <person name="Han C."/>
            <person name="Tapia R."/>
            <person name="Detter J.C."/>
            <person name="Schmutz J."/>
            <person name="Brettin T."/>
            <person name="Larimer F."/>
            <person name="Land M."/>
            <person name="Hauser L."/>
            <person name="Kyrpides N.C."/>
            <person name="Ivanova N."/>
            <person name="Goker M."/>
            <person name="Woyke T."/>
            <person name="Wu Q.L."/>
            <person name="Pockl M."/>
            <person name="Hahn M.W."/>
            <person name="Klenk H.P."/>
        </authorList>
    </citation>
    <scope>NUCLEOTIDE SEQUENCE [LARGE SCALE GENOMIC DNA]</scope>
    <source>
        <strain>DSM 18221 / CIP 109841 / QLW-P1DMWA-1</strain>
    </source>
</reference>
<comment type="function">
    <text evidence="2">With S4 and S5 plays an important role in translational accuracy.</text>
</comment>
<comment type="function">
    <text evidence="2">Interacts with and stabilizes bases of the 16S rRNA that are involved in tRNA selection in the A site and with the mRNA backbone. Located at the interface of the 30S and 50S subunits, it traverses the body of the 30S subunit contacting proteins on the other side and probably holding the rRNA structure together. The combined cluster of proteins S8, S12 and S17 appears to hold together the shoulder and platform of the 30S subunit.</text>
</comment>
<comment type="subunit">
    <text evidence="2">Part of the 30S ribosomal subunit. Contacts proteins S8 and S17. May interact with IF1 in the 30S initiation complex.</text>
</comment>
<comment type="similarity">
    <text evidence="2">Belongs to the universal ribosomal protein uS12 family.</text>
</comment>
<sequence>MPTINQLIRKPRSRLIVKSKSPALENSPQRRGVCTRVYTTTPKKPNSALRKVAKVRLTNGFEVISYIGGEGHNLQEHSVVLIRGGRVKDLPGVRYHIVRGSLDLQGVKDRKQSRSKYGAKRAKKAA</sequence>
<dbReference type="EMBL" id="CP000655">
    <property type="protein sequence ID" value="ABP33270.1"/>
    <property type="molecule type" value="Genomic_DNA"/>
</dbReference>
<dbReference type="RefSeq" id="WP_011901896.1">
    <property type="nucleotide sequence ID" value="NC_009379.1"/>
</dbReference>
<dbReference type="SMR" id="A4SUV6"/>
<dbReference type="GeneID" id="31480394"/>
<dbReference type="KEGG" id="pnu:Pnuc_0048"/>
<dbReference type="eggNOG" id="COG0048">
    <property type="taxonomic scope" value="Bacteria"/>
</dbReference>
<dbReference type="HOGENOM" id="CLU_104295_1_2_4"/>
<dbReference type="Proteomes" id="UP000000231">
    <property type="component" value="Chromosome"/>
</dbReference>
<dbReference type="GO" id="GO:0015935">
    <property type="term" value="C:small ribosomal subunit"/>
    <property type="evidence" value="ECO:0007669"/>
    <property type="project" value="InterPro"/>
</dbReference>
<dbReference type="GO" id="GO:0019843">
    <property type="term" value="F:rRNA binding"/>
    <property type="evidence" value="ECO:0007669"/>
    <property type="project" value="UniProtKB-UniRule"/>
</dbReference>
<dbReference type="GO" id="GO:0003735">
    <property type="term" value="F:structural constituent of ribosome"/>
    <property type="evidence" value="ECO:0007669"/>
    <property type="project" value="InterPro"/>
</dbReference>
<dbReference type="GO" id="GO:0000049">
    <property type="term" value="F:tRNA binding"/>
    <property type="evidence" value="ECO:0007669"/>
    <property type="project" value="UniProtKB-UniRule"/>
</dbReference>
<dbReference type="GO" id="GO:0006412">
    <property type="term" value="P:translation"/>
    <property type="evidence" value="ECO:0007669"/>
    <property type="project" value="UniProtKB-UniRule"/>
</dbReference>
<dbReference type="CDD" id="cd03368">
    <property type="entry name" value="Ribosomal_S12"/>
    <property type="match status" value="1"/>
</dbReference>
<dbReference type="FunFam" id="2.40.50.140:FF:000001">
    <property type="entry name" value="30S ribosomal protein S12"/>
    <property type="match status" value="1"/>
</dbReference>
<dbReference type="Gene3D" id="2.40.50.140">
    <property type="entry name" value="Nucleic acid-binding proteins"/>
    <property type="match status" value="1"/>
</dbReference>
<dbReference type="HAMAP" id="MF_00403_B">
    <property type="entry name" value="Ribosomal_uS12_B"/>
    <property type="match status" value="1"/>
</dbReference>
<dbReference type="InterPro" id="IPR012340">
    <property type="entry name" value="NA-bd_OB-fold"/>
</dbReference>
<dbReference type="InterPro" id="IPR006032">
    <property type="entry name" value="Ribosomal_uS12"/>
</dbReference>
<dbReference type="InterPro" id="IPR005679">
    <property type="entry name" value="Ribosomal_uS12_bac"/>
</dbReference>
<dbReference type="NCBIfam" id="TIGR00981">
    <property type="entry name" value="rpsL_bact"/>
    <property type="match status" value="1"/>
</dbReference>
<dbReference type="PANTHER" id="PTHR11652">
    <property type="entry name" value="30S RIBOSOMAL PROTEIN S12 FAMILY MEMBER"/>
    <property type="match status" value="1"/>
</dbReference>
<dbReference type="Pfam" id="PF00164">
    <property type="entry name" value="Ribosom_S12_S23"/>
    <property type="match status" value="1"/>
</dbReference>
<dbReference type="PIRSF" id="PIRSF002133">
    <property type="entry name" value="Ribosomal_S12/S23"/>
    <property type="match status" value="1"/>
</dbReference>
<dbReference type="PRINTS" id="PR01034">
    <property type="entry name" value="RIBOSOMALS12"/>
</dbReference>
<dbReference type="SUPFAM" id="SSF50249">
    <property type="entry name" value="Nucleic acid-binding proteins"/>
    <property type="match status" value="1"/>
</dbReference>
<dbReference type="PROSITE" id="PS00055">
    <property type="entry name" value="RIBOSOMAL_S12"/>
    <property type="match status" value="1"/>
</dbReference>
<feature type="chain" id="PRO_1000080407" description="Small ribosomal subunit protein uS12">
    <location>
        <begin position="1"/>
        <end position="126"/>
    </location>
</feature>
<feature type="modified residue" description="3-methylthioaspartic acid" evidence="1">
    <location>
        <position position="89"/>
    </location>
</feature>